<protein>
    <recommendedName>
        <fullName evidence="1">CinA-like protein</fullName>
    </recommendedName>
</protein>
<accession>Q2LPL3</accession>
<comment type="similarity">
    <text evidence="1">Belongs to the CinA family.</text>
</comment>
<name>CINAL_SYNAS</name>
<dbReference type="EMBL" id="CP000252">
    <property type="protein sequence ID" value="ABC76223.1"/>
    <property type="molecule type" value="Genomic_DNA"/>
</dbReference>
<dbReference type="RefSeq" id="WP_011416257.1">
    <property type="nucleotide sequence ID" value="NC_007759.1"/>
</dbReference>
<dbReference type="SMR" id="Q2LPL3"/>
<dbReference type="FunCoup" id="Q2LPL3">
    <property type="interactions" value="119"/>
</dbReference>
<dbReference type="STRING" id="56780.SYN_02030"/>
<dbReference type="KEGG" id="sat:SYN_02030"/>
<dbReference type="eggNOG" id="COG1058">
    <property type="taxonomic scope" value="Bacteria"/>
</dbReference>
<dbReference type="eggNOG" id="COG1546">
    <property type="taxonomic scope" value="Bacteria"/>
</dbReference>
<dbReference type="HOGENOM" id="CLU_030805_9_2_7"/>
<dbReference type="InParanoid" id="Q2LPL3"/>
<dbReference type="OrthoDB" id="9801454at2"/>
<dbReference type="Proteomes" id="UP000001933">
    <property type="component" value="Chromosome"/>
</dbReference>
<dbReference type="CDD" id="cd00885">
    <property type="entry name" value="cinA"/>
    <property type="match status" value="1"/>
</dbReference>
<dbReference type="Gene3D" id="3.30.70.2860">
    <property type="match status" value="1"/>
</dbReference>
<dbReference type="Gene3D" id="3.90.950.20">
    <property type="entry name" value="CinA-like"/>
    <property type="match status" value="1"/>
</dbReference>
<dbReference type="Gene3D" id="3.40.980.10">
    <property type="entry name" value="MoaB/Mog-like domain"/>
    <property type="match status" value="1"/>
</dbReference>
<dbReference type="HAMAP" id="MF_00226_B">
    <property type="entry name" value="CinA_B"/>
    <property type="match status" value="1"/>
</dbReference>
<dbReference type="InterPro" id="IPR050101">
    <property type="entry name" value="CinA"/>
</dbReference>
<dbReference type="InterPro" id="IPR036653">
    <property type="entry name" value="CinA-like_C"/>
</dbReference>
<dbReference type="InterPro" id="IPR008136">
    <property type="entry name" value="CinA_C"/>
</dbReference>
<dbReference type="InterPro" id="IPR041424">
    <property type="entry name" value="CinA_KH"/>
</dbReference>
<dbReference type="InterPro" id="IPR008135">
    <property type="entry name" value="Competence-induced_CinA"/>
</dbReference>
<dbReference type="InterPro" id="IPR036425">
    <property type="entry name" value="MoaB/Mog-like_dom_sf"/>
</dbReference>
<dbReference type="InterPro" id="IPR001453">
    <property type="entry name" value="MoaB/Mog_dom"/>
</dbReference>
<dbReference type="NCBIfam" id="TIGR00200">
    <property type="entry name" value="cinA_nterm"/>
    <property type="match status" value="1"/>
</dbReference>
<dbReference type="NCBIfam" id="TIGR00199">
    <property type="entry name" value="PncC_domain"/>
    <property type="match status" value="1"/>
</dbReference>
<dbReference type="NCBIfam" id="NF001813">
    <property type="entry name" value="PRK00549.1"/>
    <property type="match status" value="1"/>
</dbReference>
<dbReference type="PANTHER" id="PTHR13939">
    <property type="entry name" value="NICOTINAMIDE-NUCLEOTIDE AMIDOHYDROLASE PNCC"/>
    <property type="match status" value="1"/>
</dbReference>
<dbReference type="PANTHER" id="PTHR13939:SF0">
    <property type="entry name" value="NMN AMIDOHYDROLASE-LIKE PROTEIN YFAY"/>
    <property type="match status" value="1"/>
</dbReference>
<dbReference type="Pfam" id="PF02464">
    <property type="entry name" value="CinA"/>
    <property type="match status" value="1"/>
</dbReference>
<dbReference type="Pfam" id="PF18146">
    <property type="entry name" value="CinA_KH"/>
    <property type="match status" value="1"/>
</dbReference>
<dbReference type="Pfam" id="PF00994">
    <property type="entry name" value="MoCF_biosynth"/>
    <property type="match status" value="1"/>
</dbReference>
<dbReference type="PIRSF" id="PIRSF006728">
    <property type="entry name" value="CinA"/>
    <property type="match status" value="1"/>
</dbReference>
<dbReference type="SMART" id="SM00852">
    <property type="entry name" value="MoCF_biosynth"/>
    <property type="match status" value="1"/>
</dbReference>
<dbReference type="SUPFAM" id="SSF142433">
    <property type="entry name" value="CinA-like"/>
    <property type="match status" value="1"/>
</dbReference>
<dbReference type="SUPFAM" id="SSF53218">
    <property type="entry name" value="Molybdenum cofactor biosynthesis proteins"/>
    <property type="match status" value="1"/>
</dbReference>
<keyword id="KW-1185">Reference proteome</keyword>
<sequence>MRIGILTIGNELITGRIKDANASYIAREMNIQGWRVPILMSVDDDEAAIKTALDHILGMADAVIVTGGLGPTADDKTTAAVARAYGLKLYRDEAVLRRIRGIFERYGFHWAPGNDKQADFPEGAELIANPVGTAWGFSLNVQGKLIAVLPGVPGELRRMLPEGVLPILRRMFPAAVSAVATRTFKLTGISEAEVDSKLADADLEGQGVEVGFYPDFPELRLVLTVRKKTEAEAQSILKNAEAQAVQRLERQIFACDDETLEGAVAALLTERKLTLAVAESCTGGLITDRLTDISGSSVFLERGAVTYSNLAKTELLGVPESILGEHGAVSEPTARLMAEGVRRLGHTDLGLATTGIAGPTGGTEQKPLGTVFIALADGRETLCRHYHFRWGDRRRVKVATSQAALMMLKRYLAAGSAPKK</sequence>
<evidence type="ECO:0000255" key="1">
    <source>
        <dbReference type="HAMAP-Rule" id="MF_00226"/>
    </source>
</evidence>
<gene>
    <name type="ordered locus">SYNAS_03440</name>
    <name type="ORF">SYN_02030</name>
</gene>
<organism>
    <name type="scientific">Syntrophus aciditrophicus (strain SB)</name>
    <dbReference type="NCBI Taxonomy" id="56780"/>
    <lineage>
        <taxon>Bacteria</taxon>
        <taxon>Pseudomonadati</taxon>
        <taxon>Thermodesulfobacteriota</taxon>
        <taxon>Syntrophia</taxon>
        <taxon>Syntrophales</taxon>
        <taxon>Syntrophaceae</taxon>
        <taxon>Syntrophus</taxon>
    </lineage>
</organism>
<proteinExistence type="inferred from homology"/>
<feature type="chain" id="PRO_1000058740" description="CinA-like protein">
    <location>
        <begin position="1"/>
        <end position="420"/>
    </location>
</feature>
<reference key="1">
    <citation type="journal article" date="2007" name="Proc. Natl. Acad. Sci. U.S.A.">
        <title>The genome of Syntrophus aciditrophicus: life at the thermodynamic limit of microbial growth.</title>
        <authorList>
            <person name="McInerney M.J."/>
            <person name="Rohlin L."/>
            <person name="Mouttaki H."/>
            <person name="Kim U."/>
            <person name="Krupp R.S."/>
            <person name="Rios-Hernandez L."/>
            <person name="Sieber J."/>
            <person name="Struchtemeyer C.G."/>
            <person name="Bhattacharyya A."/>
            <person name="Campbell J.W."/>
            <person name="Gunsalus R.P."/>
        </authorList>
    </citation>
    <scope>NUCLEOTIDE SEQUENCE [LARGE SCALE GENOMIC DNA]</scope>
    <source>
        <strain>SB</strain>
    </source>
</reference>